<feature type="chain" id="PRO_1000092887" description="Acetylglutamate kinase">
    <location>
        <begin position="1"/>
        <end position="267"/>
    </location>
</feature>
<feature type="binding site" evidence="1">
    <location>
        <begin position="53"/>
        <end position="54"/>
    </location>
    <ligand>
        <name>substrate</name>
    </ligand>
</feature>
<feature type="binding site" evidence="1">
    <location>
        <position position="75"/>
    </location>
    <ligand>
        <name>substrate</name>
    </ligand>
</feature>
<feature type="binding site" evidence="1">
    <location>
        <position position="167"/>
    </location>
    <ligand>
        <name>substrate</name>
    </ligand>
</feature>
<feature type="site" description="Transition state stabilizer" evidence="1">
    <location>
        <position position="18"/>
    </location>
</feature>
<feature type="site" description="Transition state stabilizer" evidence="1">
    <location>
        <position position="226"/>
    </location>
</feature>
<comment type="function">
    <text evidence="1">Catalyzes the ATP-dependent phosphorylation of N-acetyl-L-glutamate.</text>
</comment>
<comment type="catalytic activity">
    <reaction evidence="1">
        <text>N-acetyl-L-glutamate + ATP = N-acetyl-L-glutamyl 5-phosphate + ADP</text>
        <dbReference type="Rhea" id="RHEA:14629"/>
        <dbReference type="ChEBI" id="CHEBI:30616"/>
        <dbReference type="ChEBI" id="CHEBI:44337"/>
        <dbReference type="ChEBI" id="CHEBI:57936"/>
        <dbReference type="ChEBI" id="CHEBI:456216"/>
        <dbReference type="EC" id="2.7.2.8"/>
    </reaction>
</comment>
<comment type="pathway">
    <text evidence="1">Amino-acid biosynthesis; L-arginine biosynthesis; N(2)-acetyl-L-ornithine from L-glutamate: step 2/4.</text>
</comment>
<comment type="subcellular location">
    <subcellularLocation>
        <location evidence="1">Cytoplasm</location>
    </subcellularLocation>
</comment>
<comment type="similarity">
    <text evidence="1">Belongs to the acetylglutamate kinase family. ArgB subfamily.</text>
</comment>
<dbReference type="EC" id="2.7.2.8" evidence="1"/>
<dbReference type="EMBL" id="CP000851">
    <property type="protein sequence ID" value="ABV85556.1"/>
    <property type="molecule type" value="Genomic_DNA"/>
</dbReference>
<dbReference type="RefSeq" id="WP_012153497.1">
    <property type="nucleotide sequence ID" value="NC_009901.1"/>
</dbReference>
<dbReference type="SMR" id="A8GZ19"/>
<dbReference type="STRING" id="398579.Spea_0228"/>
<dbReference type="KEGG" id="spl:Spea_0228"/>
<dbReference type="eggNOG" id="COG0548">
    <property type="taxonomic scope" value="Bacteria"/>
</dbReference>
<dbReference type="HOGENOM" id="CLU_053680_1_1_6"/>
<dbReference type="OrthoDB" id="5915023at2"/>
<dbReference type="UniPathway" id="UPA00068">
    <property type="reaction ID" value="UER00107"/>
</dbReference>
<dbReference type="Proteomes" id="UP000002608">
    <property type="component" value="Chromosome"/>
</dbReference>
<dbReference type="GO" id="GO:0005737">
    <property type="term" value="C:cytoplasm"/>
    <property type="evidence" value="ECO:0007669"/>
    <property type="project" value="UniProtKB-SubCell"/>
</dbReference>
<dbReference type="GO" id="GO:0003991">
    <property type="term" value="F:acetylglutamate kinase activity"/>
    <property type="evidence" value="ECO:0007669"/>
    <property type="project" value="UniProtKB-UniRule"/>
</dbReference>
<dbReference type="GO" id="GO:0005524">
    <property type="term" value="F:ATP binding"/>
    <property type="evidence" value="ECO:0007669"/>
    <property type="project" value="UniProtKB-UniRule"/>
</dbReference>
<dbReference type="GO" id="GO:0042450">
    <property type="term" value="P:arginine biosynthetic process via ornithine"/>
    <property type="evidence" value="ECO:0007669"/>
    <property type="project" value="UniProtKB-UniRule"/>
</dbReference>
<dbReference type="GO" id="GO:0006526">
    <property type="term" value="P:L-arginine biosynthetic process"/>
    <property type="evidence" value="ECO:0007669"/>
    <property type="project" value="UniProtKB-UniPathway"/>
</dbReference>
<dbReference type="Gene3D" id="3.40.1160.10">
    <property type="entry name" value="Acetylglutamate kinase-like"/>
    <property type="match status" value="1"/>
</dbReference>
<dbReference type="HAMAP" id="MF_00082">
    <property type="entry name" value="ArgB"/>
    <property type="match status" value="1"/>
</dbReference>
<dbReference type="InterPro" id="IPR036393">
    <property type="entry name" value="AceGlu_kinase-like_sf"/>
</dbReference>
<dbReference type="InterPro" id="IPR004662">
    <property type="entry name" value="AcgluKinase_fam"/>
</dbReference>
<dbReference type="InterPro" id="IPR037528">
    <property type="entry name" value="ArgB"/>
</dbReference>
<dbReference type="InterPro" id="IPR001048">
    <property type="entry name" value="Asp/Glu/Uridylate_kinase"/>
</dbReference>
<dbReference type="NCBIfam" id="TIGR00761">
    <property type="entry name" value="argB"/>
    <property type="match status" value="1"/>
</dbReference>
<dbReference type="PANTHER" id="PTHR23342">
    <property type="entry name" value="N-ACETYLGLUTAMATE SYNTHASE"/>
    <property type="match status" value="1"/>
</dbReference>
<dbReference type="PANTHER" id="PTHR23342:SF0">
    <property type="entry name" value="N-ACETYLGLUTAMATE SYNTHASE, MITOCHONDRIAL"/>
    <property type="match status" value="1"/>
</dbReference>
<dbReference type="Pfam" id="PF00696">
    <property type="entry name" value="AA_kinase"/>
    <property type="match status" value="1"/>
</dbReference>
<dbReference type="PIRSF" id="PIRSF000728">
    <property type="entry name" value="NAGK"/>
    <property type="match status" value="1"/>
</dbReference>
<dbReference type="SUPFAM" id="SSF53633">
    <property type="entry name" value="Carbamate kinase-like"/>
    <property type="match status" value="1"/>
</dbReference>
<evidence type="ECO:0000255" key="1">
    <source>
        <dbReference type="HAMAP-Rule" id="MF_00082"/>
    </source>
</evidence>
<keyword id="KW-0028">Amino-acid biosynthesis</keyword>
<keyword id="KW-0055">Arginine biosynthesis</keyword>
<keyword id="KW-0067">ATP-binding</keyword>
<keyword id="KW-0963">Cytoplasm</keyword>
<keyword id="KW-0418">Kinase</keyword>
<keyword id="KW-0547">Nucleotide-binding</keyword>
<keyword id="KW-1185">Reference proteome</keyword>
<keyword id="KW-0808">Transferase</keyword>
<name>ARGB_SHEPA</name>
<gene>
    <name evidence="1" type="primary">argB</name>
    <name type="ordered locus">Spea_0228</name>
</gene>
<protein>
    <recommendedName>
        <fullName evidence="1">Acetylglutamate kinase</fullName>
        <ecNumber evidence="1">2.7.2.8</ecNumber>
    </recommendedName>
    <alternativeName>
        <fullName evidence="1">N-acetyl-L-glutamate 5-phosphotransferase</fullName>
    </alternativeName>
    <alternativeName>
        <fullName evidence="1">NAG kinase</fullName>
        <shortName evidence="1">NAGK</shortName>
    </alternativeName>
</protein>
<proteinExistence type="inferred from homology"/>
<reference key="1">
    <citation type="submission" date="2007-10" db="EMBL/GenBank/DDBJ databases">
        <title>Complete sequence of Shewanella pealeana ATCC 700345.</title>
        <authorList>
            <consortium name="US DOE Joint Genome Institute"/>
            <person name="Copeland A."/>
            <person name="Lucas S."/>
            <person name="Lapidus A."/>
            <person name="Barry K."/>
            <person name="Glavina del Rio T."/>
            <person name="Dalin E."/>
            <person name="Tice H."/>
            <person name="Pitluck S."/>
            <person name="Chertkov O."/>
            <person name="Brettin T."/>
            <person name="Bruce D."/>
            <person name="Detter J.C."/>
            <person name="Han C."/>
            <person name="Schmutz J."/>
            <person name="Larimer F."/>
            <person name="Land M."/>
            <person name="Hauser L."/>
            <person name="Kyrpides N."/>
            <person name="Kim E."/>
            <person name="Zhao J.-S.Z."/>
            <person name="Manno D."/>
            <person name="Hawari J."/>
            <person name="Richardson P."/>
        </authorList>
    </citation>
    <scope>NUCLEOTIDE SEQUENCE [LARGE SCALE GENOMIC DNA]</scope>
    <source>
        <strain>ATCC 700345 / ANG-SQ1</strain>
    </source>
</reference>
<sequence>MTQTDLNNTEQKPVMVLKVGGALLQCDMGMSRLMQAAAKIIASGQPIIMVHGGGCLVDEQLKANGMITEKLDGLRVTPEAQIPVIVGALAGTSNKTLQAAAIKAGVTCLGMSLADAGMMNAKIKDPLLGLVGEVEPKDASYLEFVLAKGWMPIVSSIAISEQGEMLNVNADQAATALAKLVSGSLVLLSDVSGVLDGKGQLINSLNREQVNELTKIGVIEKGMKVKVEAALDVAESMGQAVQIASWRHAHQLIALCQGEAVGTQIQP</sequence>
<accession>A8GZ19</accession>
<organism>
    <name type="scientific">Shewanella pealeana (strain ATCC 700345 / ANG-SQ1)</name>
    <dbReference type="NCBI Taxonomy" id="398579"/>
    <lineage>
        <taxon>Bacteria</taxon>
        <taxon>Pseudomonadati</taxon>
        <taxon>Pseudomonadota</taxon>
        <taxon>Gammaproteobacteria</taxon>
        <taxon>Alteromonadales</taxon>
        <taxon>Shewanellaceae</taxon>
        <taxon>Shewanella</taxon>
    </lineage>
</organism>